<dbReference type="EC" id="6.3.5.-" evidence="1"/>
<dbReference type="EMBL" id="CP001598">
    <property type="protein sequence ID" value="ACQ45986.1"/>
    <property type="molecule type" value="Genomic_DNA"/>
</dbReference>
<dbReference type="RefSeq" id="WP_001047678.1">
    <property type="nucleotide sequence ID" value="NC_012659.1"/>
</dbReference>
<dbReference type="SMR" id="C3PBQ5"/>
<dbReference type="GeneID" id="45020378"/>
<dbReference type="KEGG" id="bai:BAA_0378"/>
<dbReference type="HOGENOM" id="CLU_019240_0_0_9"/>
<dbReference type="GO" id="GO:0050566">
    <property type="term" value="F:asparaginyl-tRNA synthase (glutamine-hydrolyzing) activity"/>
    <property type="evidence" value="ECO:0007669"/>
    <property type="project" value="RHEA"/>
</dbReference>
<dbReference type="GO" id="GO:0005524">
    <property type="term" value="F:ATP binding"/>
    <property type="evidence" value="ECO:0007669"/>
    <property type="project" value="UniProtKB-KW"/>
</dbReference>
<dbReference type="GO" id="GO:0050567">
    <property type="term" value="F:glutaminyl-tRNA synthase (glutamine-hydrolyzing) activity"/>
    <property type="evidence" value="ECO:0007669"/>
    <property type="project" value="UniProtKB-UniRule"/>
</dbReference>
<dbReference type="GO" id="GO:0070681">
    <property type="term" value="P:glutaminyl-tRNAGln biosynthesis via transamidation"/>
    <property type="evidence" value="ECO:0007669"/>
    <property type="project" value="TreeGrafter"/>
</dbReference>
<dbReference type="GO" id="GO:0006412">
    <property type="term" value="P:translation"/>
    <property type="evidence" value="ECO:0007669"/>
    <property type="project" value="UniProtKB-UniRule"/>
</dbReference>
<dbReference type="FunFam" id="1.10.10.410:FF:000001">
    <property type="entry name" value="Aspartyl/glutamyl-tRNA(Asn/Gln) amidotransferase subunit B"/>
    <property type="match status" value="1"/>
</dbReference>
<dbReference type="FunFam" id="1.10.150.380:FF:000001">
    <property type="entry name" value="Aspartyl/glutamyl-tRNA(Asn/Gln) amidotransferase subunit B"/>
    <property type="match status" value="1"/>
</dbReference>
<dbReference type="Gene3D" id="1.10.10.410">
    <property type="match status" value="1"/>
</dbReference>
<dbReference type="Gene3D" id="1.10.150.380">
    <property type="entry name" value="GatB domain, N-terminal subdomain"/>
    <property type="match status" value="1"/>
</dbReference>
<dbReference type="HAMAP" id="MF_00121">
    <property type="entry name" value="GatB"/>
    <property type="match status" value="1"/>
</dbReference>
<dbReference type="InterPro" id="IPR017959">
    <property type="entry name" value="Asn/Gln-tRNA_amidoTrfase_suB/E"/>
</dbReference>
<dbReference type="InterPro" id="IPR006075">
    <property type="entry name" value="Asn/Gln-tRNA_Trfase_suB/E_cat"/>
</dbReference>
<dbReference type="InterPro" id="IPR018027">
    <property type="entry name" value="Asn/Gln_amidotransferase"/>
</dbReference>
<dbReference type="InterPro" id="IPR003789">
    <property type="entry name" value="Asn/Gln_tRNA_amidoTrase-B-like"/>
</dbReference>
<dbReference type="InterPro" id="IPR004413">
    <property type="entry name" value="GatB"/>
</dbReference>
<dbReference type="InterPro" id="IPR042114">
    <property type="entry name" value="GatB_C_1"/>
</dbReference>
<dbReference type="InterPro" id="IPR023168">
    <property type="entry name" value="GatB_Yqey_C_2"/>
</dbReference>
<dbReference type="InterPro" id="IPR017958">
    <property type="entry name" value="Gln-tRNA_amidoTrfase_suB_CS"/>
</dbReference>
<dbReference type="InterPro" id="IPR014746">
    <property type="entry name" value="Gln_synth/guanido_kin_cat_dom"/>
</dbReference>
<dbReference type="NCBIfam" id="TIGR00133">
    <property type="entry name" value="gatB"/>
    <property type="match status" value="1"/>
</dbReference>
<dbReference type="NCBIfam" id="NF004011">
    <property type="entry name" value="PRK05477.1-1"/>
    <property type="match status" value="1"/>
</dbReference>
<dbReference type="NCBIfam" id="NF004012">
    <property type="entry name" value="PRK05477.1-2"/>
    <property type="match status" value="1"/>
</dbReference>
<dbReference type="NCBIfam" id="NF004014">
    <property type="entry name" value="PRK05477.1-4"/>
    <property type="match status" value="1"/>
</dbReference>
<dbReference type="PANTHER" id="PTHR11659">
    <property type="entry name" value="GLUTAMYL-TRNA GLN AMIDOTRANSFERASE SUBUNIT B MITOCHONDRIAL AND PROKARYOTIC PET112-RELATED"/>
    <property type="match status" value="1"/>
</dbReference>
<dbReference type="PANTHER" id="PTHR11659:SF0">
    <property type="entry name" value="GLUTAMYL-TRNA(GLN) AMIDOTRANSFERASE SUBUNIT B, MITOCHONDRIAL"/>
    <property type="match status" value="1"/>
</dbReference>
<dbReference type="Pfam" id="PF02934">
    <property type="entry name" value="GatB_N"/>
    <property type="match status" value="1"/>
</dbReference>
<dbReference type="Pfam" id="PF02637">
    <property type="entry name" value="GatB_Yqey"/>
    <property type="match status" value="1"/>
</dbReference>
<dbReference type="SMART" id="SM00845">
    <property type="entry name" value="GatB_Yqey"/>
    <property type="match status" value="1"/>
</dbReference>
<dbReference type="SUPFAM" id="SSF89095">
    <property type="entry name" value="GatB/YqeY motif"/>
    <property type="match status" value="1"/>
</dbReference>
<dbReference type="SUPFAM" id="SSF55931">
    <property type="entry name" value="Glutamine synthetase/guanido kinase"/>
    <property type="match status" value="1"/>
</dbReference>
<dbReference type="PROSITE" id="PS01234">
    <property type="entry name" value="GATB"/>
    <property type="match status" value="1"/>
</dbReference>
<comment type="function">
    <text evidence="1">Allows the formation of correctly charged Asn-tRNA(Asn) or Gln-tRNA(Gln) through the transamidation of misacylated Asp-tRNA(Asn) or Glu-tRNA(Gln) in organisms which lack either or both of asparaginyl-tRNA or glutaminyl-tRNA synthetases. The reaction takes place in the presence of glutamine and ATP through an activated phospho-Asp-tRNA(Asn) or phospho-Glu-tRNA(Gln).</text>
</comment>
<comment type="catalytic activity">
    <reaction evidence="1">
        <text>L-glutamyl-tRNA(Gln) + L-glutamine + ATP + H2O = L-glutaminyl-tRNA(Gln) + L-glutamate + ADP + phosphate + H(+)</text>
        <dbReference type="Rhea" id="RHEA:17521"/>
        <dbReference type="Rhea" id="RHEA-COMP:9681"/>
        <dbReference type="Rhea" id="RHEA-COMP:9684"/>
        <dbReference type="ChEBI" id="CHEBI:15377"/>
        <dbReference type="ChEBI" id="CHEBI:15378"/>
        <dbReference type="ChEBI" id="CHEBI:29985"/>
        <dbReference type="ChEBI" id="CHEBI:30616"/>
        <dbReference type="ChEBI" id="CHEBI:43474"/>
        <dbReference type="ChEBI" id="CHEBI:58359"/>
        <dbReference type="ChEBI" id="CHEBI:78520"/>
        <dbReference type="ChEBI" id="CHEBI:78521"/>
        <dbReference type="ChEBI" id="CHEBI:456216"/>
    </reaction>
</comment>
<comment type="catalytic activity">
    <reaction evidence="1">
        <text>L-aspartyl-tRNA(Asn) + L-glutamine + ATP + H2O = L-asparaginyl-tRNA(Asn) + L-glutamate + ADP + phosphate + 2 H(+)</text>
        <dbReference type="Rhea" id="RHEA:14513"/>
        <dbReference type="Rhea" id="RHEA-COMP:9674"/>
        <dbReference type="Rhea" id="RHEA-COMP:9677"/>
        <dbReference type="ChEBI" id="CHEBI:15377"/>
        <dbReference type="ChEBI" id="CHEBI:15378"/>
        <dbReference type="ChEBI" id="CHEBI:29985"/>
        <dbReference type="ChEBI" id="CHEBI:30616"/>
        <dbReference type="ChEBI" id="CHEBI:43474"/>
        <dbReference type="ChEBI" id="CHEBI:58359"/>
        <dbReference type="ChEBI" id="CHEBI:78515"/>
        <dbReference type="ChEBI" id="CHEBI:78516"/>
        <dbReference type="ChEBI" id="CHEBI:456216"/>
    </reaction>
</comment>
<comment type="subunit">
    <text evidence="1">Heterotrimer of A, B and C subunits.</text>
</comment>
<comment type="similarity">
    <text evidence="1">Belongs to the GatB/GatE family. GatB subfamily.</text>
</comment>
<proteinExistence type="inferred from homology"/>
<keyword id="KW-0067">ATP-binding</keyword>
<keyword id="KW-0436">Ligase</keyword>
<keyword id="KW-0547">Nucleotide-binding</keyword>
<keyword id="KW-0648">Protein biosynthesis</keyword>
<feature type="chain" id="PRO_1000122505" description="Aspartyl/glutamyl-tRNA(Asn/Gln) amidotransferase subunit B">
    <location>
        <begin position="1"/>
        <end position="475"/>
    </location>
</feature>
<evidence type="ECO:0000255" key="1">
    <source>
        <dbReference type="HAMAP-Rule" id="MF_00121"/>
    </source>
</evidence>
<organism>
    <name type="scientific">Bacillus anthracis (strain A0248)</name>
    <dbReference type="NCBI Taxonomy" id="592021"/>
    <lineage>
        <taxon>Bacteria</taxon>
        <taxon>Bacillati</taxon>
        <taxon>Bacillota</taxon>
        <taxon>Bacilli</taxon>
        <taxon>Bacillales</taxon>
        <taxon>Bacillaceae</taxon>
        <taxon>Bacillus</taxon>
        <taxon>Bacillus cereus group</taxon>
    </lineage>
</organism>
<sequence length="475" mass="53222">MNLETIIGLEVHVELKTNSKIFSASPTEFGAEPNTQTSVIDLGYPGVLPTLNKEAVNFAMKAAMALNCEIATETKFDRKNYFYPDNPKAYQISQFDKPIGENGWIEIEVDGKKKRIGITRLHLEEDAGKSTHTADGSLVDYNRQGMPLIEIVSEPDMRTPEEAYAYLEKLKSIIQYTGVSDCKMEEGSLRCDANISLRPVGQEKFGTKAELKNLNSFTYVQKGLEHEQVRQEKELLSGGIIQQETRRYDEATKKTILMRVKEGSDDYRYFPEPDLVELYIDDAWKEEVRASIPELPDARKARYVAEIGLPAYDAHVLTLTKEMSDFFEAAIADGADAKLTSNWLMGEVLAYLNKQQKELKDVALTPAGLSKMVQLIEKGTISSKIAKKVFNELIEKGGDPEEIVKAKGLVQISDEGTLRKVVTEILDNNEQSIEDFKNGKDRAIGFLVGQIMKATKGQANPPLVNKILLEEINKR</sequence>
<accession>C3PBQ5</accession>
<protein>
    <recommendedName>
        <fullName evidence="1">Aspartyl/glutamyl-tRNA(Asn/Gln) amidotransferase subunit B</fullName>
        <shortName evidence="1">Asp/Glu-ADT subunit B</shortName>
        <ecNumber evidence="1">6.3.5.-</ecNumber>
    </recommendedName>
</protein>
<name>GATB_BACAA</name>
<gene>
    <name evidence="1" type="primary">gatB</name>
    <name type="ordered locus">BAA_0378</name>
</gene>
<reference key="1">
    <citation type="submission" date="2009-04" db="EMBL/GenBank/DDBJ databases">
        <title>Genome sequence of Bacillus anthracis A0248.</title>
        <authorList>
            <person name="Dodson R.J."/>
            <person name="Munk A.C."/>
            <person name="Bruce D."/>
            <person name="Detter C."/>
            <person name="Tapia R."/>
            <person name="Sutton G."/>
            <person name="Sims D."/>
            <person name="Brettin T."/>
        </authorList>
    </citation>
    <scope>NUCLEOTIDE SEQUENCE [LARGE SCALE GENOMIC DNA]</scope>
    <source>
        <strain>A0248</strain>
    </source>
</reference>